<feature type="chain" id="PRO_0000196832" description="Uncharacterized mitochondrial protein ymf1">
    <location>
        <begin position="1"/>
        <end position="168"/>
    </location>
</feature>
<sequence>MQRKFLRKKALSLRSRALCPQEIKKQYPYILLFHCSGLTSRQWRQIKNILCTIKGKTLFKPKEKKQNILPNNQGDWIAQLASSAGPTCILYLAKEAPNNTWSQLLPSASYSQNLVLLYGQDRSTVFNHMDIKKATTLETTSVFQQLFGFMFLPGACFLFLVEQANGRK</sequence>
<protein>
    <recommendedName>
        <fullName>Uncharacterized mitochondrial protein ymf1</fullName>
    </recommendedName>
    <alternativeName>
        <fullName>ORF168</fullName>
    </alternativeName>
</protein>
<dbReference type="EMBL" id="M68929">
    <property type="protein sequence ID" value="AAC09467.1"/>
    <property type="molecule type" value="Genomic_DNA"/>
</dbReference>
<dbReference type="PIR" id="S26013">
    <property type="entry name" value="S26013"/>
</dbReference>
<dbReference type="GO" id="GO:0005739">
    <property type="term" value="C:mitochondrion"/>
    <property type="evidence" value="ECO:0007669"/>
    <property type="project" value="UniProtKB-SubCell"/>
</dbReference>
<keyword id="KW-0496">Mitochondrion</keyword>
<gene>
    <name type="primary">YMF1</name>
</gene>
<organism>
    <name type="scientific">Marchantia polymorpha</name>
    <name type="common">Common liverwort</name>
    <name type="synonym">Marchantia aquatica</name>
    <dbReference type="NCBI Taxonomy" id="3197"/>
    <lineage>
        <taxon>Eukaryota</taxon>
        <taxon>Viridiplantae</taxon>
        <taxon>Streptophyta</taxon>
        <taxon>Embryophyta</taxon>
        <taxon>Marchantiophyta</taxon>
        <taxon>Marchantiopsida</taxon>
        <taxon>Marchantiidae</taxon>
        <taxon>Marchantiales</taxon>
        <taxon>Marchantiaceae</taxon>
        <taxon>Marchantia</taxon>
    </lineage>
</organism>
<comment type="subcellular location">
    <subcellularLocation>
        <location evidence="1">Mitochondrion</location>
    </subcellularLocation>
</comment>
<accession>P38450</accession>
<proteinExistence type="predicted"/>
<reference key="1">
    <citation type="journal article" date="1992" name="J. Mol. Biol.">
        <title>Gene organization deduced from the complete sequence of liverwort Marchantia polymorpha mitochondrial DNA. A primitive form of plant mitochondrial genome.</title>
        <authorList>
            <person name="Oda K."/>
            <person name="Yamato K."/>
            <person name="Ohta E."/>
            <person name="Nakamura Y."/>
            <person name="Takemura M."/>
            <person name="Nozato N."/>
            <person name="Akashi K."/>
            <person name="Kanegae T."/>
            <person name="Ogura Y."/>
            <person name="Kohchi T."/>
            <person name="Ohyama K."/>
        </authorList>
    </citation>
    <scope>NUCLEOTIDE SEQUENCE [GENOMIC DNA]</scope>
</reference>
<geneLocation type="mitochondrion"/>
<evidence type="ECO:0000305" key="1"/>
<name>YMF01_MARPO</name>